<dbReference type="EC" id="4.98.1.1" evidence="1"/>
<dbReference type="EMBL" id="CP000316">
    <property type="protein sequence ID" value="ABE43943.1"/>
    <property type="molecule type" value="Genomic_DNA"/>
</dbReference>
<dbReference type="RefSeq" id="WP_011482942.1">
    <property type="nucleotide sequence ID" value="NC_007948.1"/>
</dbReference>
<dbReference type="SMR" id="Q12BZ9"/>
<dbReference type="STRING" id="296591.Bpro_2013"/>
<dbReference type="KEGG" id="pol:Bpro_2013"/>
<dbReference type="eggNOG" id="COG0276">
    <property type="taxonomic scope" value="Bacteria"/>
</dbReference>
<dbReference type="HOGENOM" id="CLU_018884_0_0_4"/>
<dbReference type="OrthoDB" id="9809741at2"/>
<dbReference type="UniPathway" id="UPA00252">
    <property type="reaction ID" value="UER00325"/>
</dbReference>
<dbReference type="Proteomes" id="UP000001983">
    <property type="component" value="Chromosome"/>
</dbReference>
<dbReference type="GO" id="GO:0005737">
    <property type="term" value="C:cytoplasm"/>
    <property type="evidence" value="ECO:0007669"/>
    <property type="project" value="UniProtKB-SubCell"/>
</dbReference>
<dbReference type="GO" id="GO:0004325">
    <property type="term" value="F:ferrochelatase activity"/>
    <property type="evidence" value="ECO:0007669"/>
    <property type="project" value="UniProtKB-UniRule"/>
</dbReference>
<dbReference type="GO" id="GO:0046872">
    <property type="term" value="F:metal ion binding"/>
    <property type="evidence" value="ECO:0007669"/>
    <property type="project" value="UniProtKB-KW"/>
</dbReference>
<dbReference type="GO" id="GO:0006783">
    <property type="term" value="P:heme biosynthetic process"/>
    <property type="evidence" value="ECO:0007669"/>
    <property type="project" value="UniProtKB-UniRule"/>
</dbReference>
<dbReference type="CDD" id="cd00419">
    <property type="entry name" value="Ferrochelatase_C"/>
    <property type="match status" value="1"/>
</dbReference>
<dbReference type="CDD" id="cd03411">
    <property type="entry name" value="Ferrochelatase_N"/>
    <property type="match status" value="1"/>
</dbReference>
<dbReference type="FunFam" id="3.40.50.1400:FF:000002">
    <property type="entry name" value="Ferrochelatase"/>
    <property type="match status" value="1"/>
</dbReference>
<dbReference type="Gene3D" id="3.40.50.1400">
    <property type="match status" value="2"/>
</dbReference>
<dbReference type="HAMAP" id="MF_00323">
    <property type="entry name" value="Ferrochelatase"/>
    <property type="match status" value="1"/>
</dbReference>
<dbReference type="InterPro" id="IPR001015">
    <property type="entry name" value="Ferrochelatase"/>
</dbReference>
<dbReference type="InterPro" id="IPR019772">
    <property type="entry name" value="Ferrochelatase_AS"/>
</dbReference>
<dbReference type="InterPro" id="IPR033644">
    <property type="entry name" value="Ferrochelatase_C"/>
</dbReference>
<dbReference type="InterPro" id="IPR033659">
    <property type="entry name" value="Ferrochelatase_N"/>
</dbReference>
<dbReference type="NCBIfam" id="TIGR00109">
    <property type="entry name" value="hemH"/>
    <property type="match status" value="1"/>
</dbReference>
<dbReference type="PANTHER" id="PTHR11108">
    <property type="entry name" value="FERROCHELATASE"/>
    <property type="match status" value="1"/>
</dbReference>
<dbReference type="PANTHER" id="PTHR11108:SF1">
    <property type="entry name" value="FERROCHELATASE, MITOCHONDRIAL"/>
    <property type="match status" value="1"/>
</dbReference>
<dbReference type="Pfam" id="PF00762">
    <property type="entry name" value="Ferrochelatase"/>
    <property type="match status" value="1"/>
</dbReference>
<dbReference type="SUPFAM" id="SSF53800">
    <property type="entry name" value="Chelatase"/>
    <property type="match status" value="1"/>
</dbReference>
<dbReference type="PROSITE" id="PS00534">
    <property type="entry name" value="FERROCHELATASE"/>
    <property type="match status" value="1"/>
</dbReference>
<gene>
    <name evidence="1" type="primary">hemH</name>
    <name type="ordered locus">Bpro_2013</name>
</gene>
<reference key="1">
    <citation type="journal article" date="2008" name="Appl. Environ. Microbiol.">
        <title>The genome of Polaromonas sp. strain JS666: insights into the evolution of a hydrocarbon- and xenobiotic-degrading bacterium, and features of relevance to biotechnology.</title>
        <authorList>
            <person name="Mattes T.E."/>
            <person name="Alexander A.K."/>
            <person name="Richardson P.M."/>
            <person name="Munk A.C."/>
            <person name="Han C.S."/>
            <person name="Stothard P."/>
            <person name="Coleman N.V."/>
        </authorList>
    </citation>
    <scope>NUCLEOTIDE SEQUENCE [LARGE SCALE GENOMIC DNA]</scope>
    <source>
        <strain>JS666 / ATCC BAA-500</strain>
    </source>
</reference>
<name>HEMH_POLSJ</name>
<evidence type="ECO:0000255" key="1">
    <source>
        <dbReference type="HAMAP-Rule" id="MF_00323"/>
    </source>
</evidence>
<protein>
    <recommendedName>
        <fullName evidence="1">Ferrochelatase</fullName>
        <ecNumber evidence="1">4.98.1.1</ecNumber>
    </recommendedName>
    <alternativeName>
        <fullName evidence="1">Heme synthase</fullName>
    </alternativeName>
    <alternativeName>
        <fullName evidence="1">Protoheme ferro-lyase</fullName>
    </alternativeName>
</protein>
<accession>Q12BZ9</accession>
<comment type="function">
    <text evidence="1">Catalyzes the ferrous insertion into protoporphyrin IX.</text>
</comment>
<comment type="catalytic activity">
    <reaction evidence="1">
        <text>heme b + 2 H(+) = protoporphyrin IX + Fe(2+)</text>
        <dbReference type="Rhea" id="RHEA:22584"/>
        <dbReference type="ChEBI" id="CHEBI:15378"/>
        <dbReference type="ChEBI" id="CHEBI:29033"/>
        <dbReference type="ChEBI" id="CHEBI:57306"/>
        <dbReference type="ChEBI" id="CHEBI:60344"/>
        <dbReference type="EC" id="4.98.1.1"/>
    </reaction>
</comment>
<comment type="pathway">
    <text evidence="1">Porphyrin-containing compound metabolism; protoheme biosynthesis; protoheme from protoporphyrin-IX: step 1/1.</text>
</comment>
<comment type="subcellular location">
    <subcellularLocation>
        <location evidence="1">Cytoplasm</location>
    </subcellularLocation>
</comment>
<comment type="similarity">
    <text evidence="1">Belongs to the ferrochelatase family.</text>
</comment>
<proteinExistence type="inferred from homology"/>
<keyword id="KW-0963">Cytoplasm</keyword>
<keyword id="KW-0350">Heme biosynthesis</keyword>
<keyword id="KW-0408">Iron</keyword>
<keyword id="KW-0456">Lyase</keyword>
<keyword id="KW-0479">Metal-binding</keyword>
<keyword id="KW-0627">Porphyrin biosynthesis</keyword>
<keyword id="KW-1185">Reference proteome</keyword>
<organism>
    <name type="scientific">Polaromonas sp. (strain JS666 / ATCC BAA-500)</name>
    <dbReference type="NCBI Taxonomy" id="296591"/>
    <lineage>
        <taxon>Bacteria</taxon>
        <taxon>Pseudomonadati</taxon>
        <taxon>Pseudomonadota</taxon>
        <taxon>Betaproteobacteria</taxon>
        <taxon>Burkholderiales</taxon>
        <taxon>Comamonadaceae</taxon>
        <taxon>Polaromonas</taxon>
    </lineage>
</organism>
<sequence length="367" mass="41079">MSFAPEPSFSHGKPPAASCATAILLCNLGTPDAPTAPALRRYLAEFLSDPRVVEIPRPIWWLILHGIILRLRPKKSATKYASIWTPEGSPLKVWTQKQALMLRGYLGARGHTVEVRYAMRYGNPSIASQLNQLKADGATRILILPAYPQYSGTTTASVFDAVYSWAARVRRIPEFRFVNNYHDDPGYISALAERVRTHWRHYGQAGQLVMSFHGVPERTLKLGDPYHCECHKTARLLAEKLGLGKDRYKVTFQSRFGKAKWLEPYTEPTLIRMAQAGIERVDVVCPGFTGDCLETLEEIAMEARHAFLKAGGKEFHYIECLNDSPTWIAALAEFSARQLAGWPTQAPRDTEALRKSGERALAMGAPR</sequence>
<feature type="chain" id="PRO_1000059485" description="Ferrochelatase">
    <location>
        <begin position="1"/>
        <end position="367"/>
    </location>
</feature>
<feature type="binding site" evidence="1">
    <location>
        <position position="213"/>
    </location>
    <ligand>
        <name>Fe cation</name>
        <dbReference type="ChEBI" id="CHEBI:24875"/>
    </ligand>
</feature>
<feature type="binding site" evidence="1">
    <location>
        <position position="294"/>
    </location>
    <ligand>
        <name>Fe cation</name>
        <dbReference type="ChEBI" id="CHEBI:24875"/>
    </ligand>
</feature>